<proteinExistence type="inferred from homology"/>
<gene>
    <name evidence="1" type="primary">dxs</name>
    <name type="ordered locus">BCAN_A0440</name>
</gene>
<keyword id="KW-0414">Isoprene biosynthesis</keyword>
<keyword id="KW-0460">Magnesium</keyword>
<keyword id="KW-0479">Metal-binding</keyword>
<keyword id="KW-1185">Reference proteome</keyword>
<keyword id="KW-0784">Thiamine biosynthesis</keyword>
<keyword id="KW-0786">Thiamine pyrophosphate</keyword>
<keyword id="KW-0808">Transferase</keyword>
<organism>
    <name type="scientific">Brucella canis (strain ATCC 23365 / NCTC 10854 / RM-666)</name>
    <dbReference type="NCBI Taxonomy" id="483179"/>
    <lineage>
        <taxon>Bacteria</taxon>
        <taxon>Pseudomonadati</taxon>
        <taxon>Pseudomonadota</taxon>
        <taxon>Alphaproteobacteria</taxon>
        <taxon>Hyphomicrobiales</taxon>
        <taxon>Brucellaceae</taxon>
        <taxon>Brucella/Ochrobactrum group</taxon>
        <taxon>Brucella</taxon>
    </lineage>
</organism>
<evidence type="ECO:0000255" key="1">
    <source>
        <dbReference type="HAMAP-Rule" id="MF_00315"/>
    </source>
</evidence>
<dbReference type="EC" id="2.2.1.7" evidence="1"/>
<dbReference type="EMBL" id="CP000872">
    <property type="protein sequence ID" value="ABX61524.1"/>
    <property type="molecule type" value="Genomic_DNA"/>
</dbReference>
<dbReference type="RefSeq" id="WP_004690601.1">
    <property type="nucleotide sequence ID" value="NC_010103.1"/>
</dbReference>
<dbReference type="SMR" id="A9M8W0"/>
<dbReference type="GeneID" id="55590195"/>
<dbReference type="KEGG" id="bcs:BCAN_A0440"/>
<dbReference type="HOGENOM" id="CLU_009227_1_4_5"/>
<dbReference type="PhylomeDB" id="A9M8W0"/>
<dbReference type="UniPathway" id="UPA00064">
    <property type="reaction ID" value="UER00091"/>
</dbReference>
<dbReference type="Proteomes" id="UP000001385">
    <property type="component" value="Chromosome I"/>
</dbReference>
<dbReference type="GO" id="GO:0008661">
    <property type="term" value="F:1-deoxy-D-xylulose-5-phosphate synthase activity"/>
    <property type="evidence" value="ECO:0007669"/>
    <property type="project" value="UniProtKB-UniRule"/>
</dbReference>
<dbReference type="GO" id="GO:0000287">
    <property type="term" value="F:magnesium ion binding"/>
    <property type="evidence" value="ECO:0007669"/>
    <property type="project" value="UniProtKB-UniRule"/>
</dbReference>
<dbReference type="GO" id="GO:0030976">
    <property type="term" value="F:thiamine pyrophosphate binding"/>
    <property type="evidence" value="ECO:0007669"/>
    <property type="project" value="UniProtKB-UniRule"/>
</dbReference>
<dbReference type="GO" id="GO:0052865">
    <property type="term" value="P:1-deoxy-D-xylulose 5-phosphate biosynthetic process"/>
    <property type="evidence" value="ECO:0007669"/>
    <property type="project" value="UniProtKB-UniPathway"/>
</dbReference>
<dbReference type="GO" id="GO:0019682">
    <property type="term" value="P:glyceraldehyde-3-phosphate metabolic process"/>
    <property type="evidence" value="ECO:0007669"/>
    <property type="project" value="UniProtKB-ARBA"/>
</dbReference>
<dbReference type="GO" id="GO:0016114">
    <property type="term" value="P:terpenoid biosynthetic process"/>
    <property type="evidence" value="ECO:0007669"/>
    <property type="project" value="UniProtKB-UniRule"/>
</dbReference>
<dbReference type="GO" id="GO:0009228">
    <property type="term" value="P:thiamine biosynthetic process"/>
    <property type="evidence" value="ECO:0007669"/>
    <property type="project" value="UniProtKB-UniRule"/>
</dbReference>
<dbReference type="CDD" id="cd02007">
    <property type="entry name" value="TPP_DXS"/>
    <property type="match status" value="1"/>
</dbReference>
<dbReference type="CDD" id="cd07033">
    <property type="entry name" value="TPP_PYR_DXS_TK_like"/>
    <property type="match status" value="1"/>
</dbReference>
<dbReference type="FunFam" id="3.40.50.920:FF:000002">
    <property type="entry name" value="1-deoxy-D-xylulose-5-phosphate synthase"/>
    <property type="match status" value="1"/>
</dbReference>
<dbReference type="FunFam" id="3.40.50.970:FF:000005">
    <property type="entry name" value="1-deoxy-D-xylulose-5-phosphate synthase"/>
    <property type="match status" value="1"/>
</dbReference>
<dbReference type="Gene3D" id="3.40.50.920">
    <property type="match status" value="1"/>
</dbReference>
<dbReference type="Gene3D" id="3.40.50.970">
    <property type="match status" value="2"/>
</dbReference>
<dbReference type="HAMAP" id="MF_00315">
    <property type="entry name" value="DXP_synth"/>
    <property type="match status" value="1"/>
</dbReference>
<dbReference type="InterPro" id="IPR005477">
    <property type="entry name" value="Dxylulose-5-P_synthase"/>
</dbReference>
<dbReference type="InterPro" id="IPR029061">
    <property type="entry name" value="THDP-binding"/>
</dbReference>
<dbReference type="InterPro" id="IPR009014">
    <property type="entry name" value="Transketo_C/PFOR_II"/>
</dbReference>
<dbReference type="InterPro" id="IPR005475">
    <property type="entry name" value="Transketolase-like_Pyr-bd"/>
</dbReference>
<dbReference type="InterPro" id="IPR020826">
    <property type="entry name" value="Transketolase_BS"/>
</dbReference>
<dbReference type="InterPro" id="IPR033248">
    <property type="entry name" value="Transketolase_C"/>
</dbReference>
<dbReference type="InterPro" id="IPR049557">
    <property type="entry name" value="Transketolase_CS"/>
</dbReference>
<dbReference type="NCBIfam" id="TIGR00204">
    <property type="entry name" value="dxs"/>
    <property type="match status" value="1"/>
</dbReference>
<dbReference type="NCBIfam" id="NF003933">
    <property type="entry name" value="PRK05444.2-2"/>
    <property type="match status" value="1"/>
</dbReference>
<dbReference type="PANTHER" id="PTHR43322">
    <property type="entry name" value="1-D-DEOXYXYLULOSE 5-PHOSPHATE SYNTHASE-RELATED"/>
    <property type="match status" value="1"/>
</dbReference>
<dbReference type="PANTHER" id="PTHR43322:SF5">
    <property type="entry name" value="1-DEOXY-D-XYLULOSE-5-PHOSPHATE SYNTHASE, CHLOROPLASTIC"/>
    <property type="match status" value="1"/>
</dbReference>
<dbReference type="Pfam" id="PF13292">
    <property type="entry name" value="DXP_synthase_N"/>
    <property type="match status" value="1"/>
</dbReference>
<dbReference type="Pfam" id="PF02779">
    <property type="entry name" value="Transket_pyr"/>
    <property type="match status" value="1"/>
</dbReference>
<dbReference type="Pfam" id="PF02780">
    <property type="entry name" value="Transketolase_C"/>
    <property type="match status" value="1"/>
</dbReference>
<dbReference type="SMART" id="SM00861">
    <property type="entry name" value="Transket_pyr"/>
    <property type="match status" value="1"/>
</dbReference>
<dbReference type="SUPFAM" id="SSF52518">
    <property type="entry name" value="Thiamin diphosphate-binding fold (THDP-binding)"/>
    <property type="match status" value="2"/>
</dbReference>
<dbReference type="SUPFAM" id="SSF52922">
    <property type="entry name" value="TK C-terminal domain-like"/>
    <property type="match status" value="1"/>
</dbReference>
<dbReference type="PROSITE" id="PS00801">
    <property type="entry name" value="TRANSKETOLASE_1"/>
    <property type="match status" value="1"/>
</dbReference>
<dbReference type="PROSITE" id="PS00802">
    <property type="entry name" value="TRANSKETOLASE_2"/>
    <property type="match status" value="1"/>
</dbReference>
<protein>
    <recommendedName>
        <fullName evidence="1">1-deoxy-D-xylulose-5-phosphate synthase</fullName>
        <ecNumber evidence="1">2.2.1.7</ecNumber>
    </recommendedName>
    <alternativeName>
        <fullName evidence="1">1-deoxyxylulose-5-phosphate synthase</fullName>
        <shortName evidence="1">DXP synthase</shortName>
        <shortName evidence="1">DXPS</shortName>
    </alternativeName>
</protein>
<name>DXS_BRUC2</name>
<accession>A9M8W0</accession>
<feature type="chain" id="PRO_1000079083" description="1-deoxy-D-xylulose-5-phosphate synthase">
    <location>
        <begin position="1"/>
        <end position="643"/>
    </location>
</feature>
<feature type="binding site" evidence="1">
    <location>
        <position position="78"/>
    </location>
    <ligand>
        <name>thiamine diphosphate</name>
        <dbReference type="ChEBI" id="CHEBI:58937"/>
    </ligand>
</feature>
<feature type="binding site" evidence="1">
    <location>
        <begin position="119"/>
        <end position="121"/>
    </location>
    <ligand>
        <name>thiamine diphosphate</name>
        <dbReference type="ChEBI" id="CHEBI:58937"/>
    </ligand>
</feature>
<feature type="binding site" evidence="1">
    <location>
        <position position="150"/>
    </location>
    <ligand>
        <name>Mg(2+)</name>
        <dbReference type="ChEBI" id="CHEBI:18420"/>
    </ligand>
</feature>
<feature type="binding site" evidence="1">
    <location>
        <begin position="151"/>
        <end position="152"/>
    </location>
    <ligand>
        <name>thiamine diphosphate</name>
        <dbReference type="ChEBI" id="CHEBI:58937"/>
    </ligand>
</feature>
<feature type="binding site" evidence="1">
    <location>
        <position position="179"/>
    </location>
    <ligand>
        <name>Mg(2+)</name>
        <dbReference type="ChEBI" id="CHEBI:18420"/>
    </ligand>
</feature>
<feature type="binding site" evidence="1">
    <location>
        <position position="179"/>
    </location>
    <ligand>
        <name>thiamine diphosphate</name>
        <dbReference type="ChEBI" id="CHEBI:58937"/>
    </ligand>
</feature>
<feature type="binding site" evidence="1">
    <location>
        <position position="288"/>
    </location>
    <ligand>
        <name>thiamine diphosphate</name>
        <dbReference type="ChEBI" id="CHEBI:58937"/>
    </ligand>
</feature>
<feature type="binding site" evidence="1">
    <location>
        <position position="370"/>
    </location>
    <ligand>
        <name>thiamine diphosphate</name>
        <dbReference type="ChEBI" id="CHEBI:58937"/>
    </ligand>
</feature>
<comment type="function">
    <text evidence="1">Catalyzes the acyloin condensation reaction between C atoms 2 and 3 of pyruvate and glyceraldehyde 3-phosphate to yield 1-deoxy-D-xylulose-5-phosphate (DXP).</text>
</comment>
<comment type="catalytic activity">
    <reaction evidence="1">
        <text>D-glyceraldehyde 3-phosphate + pyruvate + H(+) = 1-deoxy-D-xylulose 5-phosphate + CO2</text>
        <dbReference type="Rhea" id="RHEA:12605"/>
        <dbReference type="ChEBI" id="CHEBI:15361"/>
        <dbReference type="ChEBI" id="CHEBI:15378"/>
        <dbReference type="ChEBI" id="CHEBI:16526"/>
        <dbReference type="ChEBI" id="CHEBI:57792"/>
        <dbReference type="ChEBI" id="CHEBI:59776"/>
        <dbReference type="EC" id="2.2.1.7"/>
    </reaction>
</comment>
<comment type="cofactor">
    <cofactor evidence="1">
        <name>Mg(2+)</name>
        <dbReference type="ChEBI" id="CHEBI:18420"/>
    </cofactor>
    <text evidence="1">Binds 1 Mg(2+) ion per subunit.</text>
</comment>
<comment type="cofactor">
    <cofactor evidence="1">
        <name>thiamine diphosphate</name>
        <dbReference type="ChEBI" id="CHEBI:58937"/>
    </cofactor>
    <text evidence="1">Binds 1 thiamine pyrophosphate per subunit.</text>
</comment>
<comment type="pathway">
    <text evidence="1">Metabolic intermediate biosynthesis; 1-deoxy-D-xylulose 5-phosphate biosynthesis; 1-deoxy-D-xylulose 5-phosphate from D-glyceraldehyde 3-phosphate and pyruvate: step 1/1.</text>
</comment>
<comment type="subunit">
    <text evidence="1">Homodimer.</text>
</comment>
<comment type="similarity">
    <text evidence="1">Belongs to the transketolase family. DXPS subfamily.</text>
</comment>
<reference key="1">
    <citation type="submission" date="2007-10" db="EMBL/GenBank/DDBJ databases">
        <title>Brucella canis ATCC 23365 whole genome shotgun sequencing project.</title>
        <authorList>
            <person name="Setubal J.C."/>
            <person name="Bowns C."/>
            <person name="Boyle S."/>
            <person name="Crasta O.R."/>
            <person name="Czar M.J."/>
            <person name="Dharmanolla C."/>
            <person name="Gillespie J.J."/>
            <person name="Kenyon R.W."/>
            <person name="Lu J."/>
            <person name="Mane S."/>
            <person name="Mohapatra S."/>
            <person name="Nagrani S."/>
            <person name="Purkayastha A."/>
            <person name="Rajasimha H.K."/>
            <person name="Shallom J.M."/>
            <person name="Shallom S."/>
            <person name="Shukla M."/>
            <person name="Snyder E.E."/>
            <person name="Sobral B.W."/>
            <person name="Wattam A.R."/>
            <person name="Will R."/>
            <person name="Williams K."/>
            <person name="Yoo H."/>
            <person name="Bruce D."/>
            <person name="Detter C."/>
            <person name="Munk C."/>
            <person name="Brettin T.S."/>
        </authorList>
    </citation>
    <scope>NUCLEOTIDE SEQUENCE [LARGE SCALE GENOMIC DNA]</scope>
    <source>
        <strain>ATCC 23365 / NCTC 10854 / RM-666</strain>
    </source>
</reference>
<sequence length="643" mass="69180">MSRPSTPLLDKAPTPDRLRALPEQDLPQLAEELRTELIDAVSTTGGHLGAGLGVVELTVALHHVFNTPYDRIIWDVGHQAYPHKILTGRRDRIRTLRQAGGLSGFTKRAESEYDPFGAAHSSTSISAGLGMAVASELSGEKRNVIAVIGDGSMSAGMAYEAMNNAGALDARLIVILNDNDMSIAPPTGAMSAYLARLVSGRTYRSVREAAKQVAQKLPKFLQDKARKSEEYARAFFTGGTLFEELGFYYVGPIDGHNLDHLLPVLKNVRDTQKGPVLIHVVTQKGKGYAPAEAAADKYHGVNKFDVITGKQAKPPANVPSYTKIFGTSLIEEARHDDKIVAVTAAMPTGTGLDLFGEAFPKRVFDVGIAEQHAVTFAAGLASEGYKPFCAIYSTFLQRGYDQVVHDVSIQNLPVRFPIDRAGLVGADGPTHAGSFDTGFLAALPGFVVMAASDEAELRHMVRTAAEYDEGPISFRYPRGDGVGVDLPERGSVLEIGKGRIVREGTKVALLSFGTRLQECLAAAEELGAAGLSTTVADARFAKPLDHDLIRRLAREHEVLVMVEEGAVGGFGSHVLQFLATDGLLDRGLKVRALTLPDIYQDHGKPDAMYAEAGLDRTGIVRTVFAALHRDELGHEALPTPFRA</sequence>